<keyword id="KW-0028">Amino-acid biosynthesis</keyword>
<keyword id="KW-0963">Cytoplasm</keyword>
<keyword id="KW-0368">Histidine biosynthesis</keyword>
<keyword id="KW-0456">Lyase</keyword>
<keyword id="KW-1185">Reference proteome</keyword>
<accession>Q9K6Z3</accession>
<reference key="1">
    <citation type="journal article" date="2000" name="Nucleic Acids Res.">
        <title>Complete genome sequence of the alkaliphilic bacterium Bacillus halodurans and genomic sequence comparison with Bacillus subtilis.</title>
        <authorList>
            <person name="Takami H."/>
            <person name="Nakasone K."/>
            <person name="Takaki Y."/>
            <person name="Maeno G."/>
            <person name="Sasaki R."/>
            <person name="Masui N."/>
            <person name="Fuji F."/>
            <person name="Hirama C."/>
            <person name="Nakamura Y."/>
            <person name="Ogasawara N."/>
            <person name="Kuhara S."/>
            <person name="Horikoshi K."/>
        </authorList>
    </citation>
    <scope>NUCLEOTIDE SEQUENCE [LARGE SCALE GENOMIC DNA]</scope>
    <source>
        <strain>ATCC BAA-125 / DSM 18197 / FERM 7344 / JCM 9153 / C-125</strain>
    </source>
</reference>
<dbReference type="EC" id="4.2.1.19" evidence="1"/>
<dbReference type="EMBL" id="BA000004">
    <property type="protein sequence ID" value="BAB07300.1"/>
    <property type="molecule type" value="Genomic_DNA"/>
</dbReference>
<dbReference type="PIR" id="E84097">
    <property type="entry name" value="E84097"/>
</dbReference>
<dbReference type="RefSeq" id="WP_010899709.1">
    <property type="nucleotide sequence ID" value="NC_002570.2"/>
</dbReference>
<dbReference type="SMR" id="Q9K6Z3"/>
<dbReference type="STRING" id="272558.gene:10729494"/>
<dbReference type="KEGG" id="bha:BH3581"/>
<dbReference type="eggNOG" id="COG0131">
    <property type="taxonomic scope" value="Bacteria"/>
</dbReference>
<dbReference type="HOGENOM" id="CLU_044308_2_0_9"/>
<dbReference type="OrthoDB" id="9790411at2"/>
<dbReference type="UniPathway" id="UPA00031">
    <property type="reaction ID" value="UER00011"/>
</dbReference>
<dbReference type="Proteomes" id="UP000001258">
    <property type="component" value="Chromosome"/>
</dbReference>
<dbReference type="GO" id="GO:0005737">
    <property type="term" value="C:cytoplasm"/>
    <property type="evidence" value="ECO:0007669"/>
    <property type="project" value="UniProtKB-SubCell"/>
</dbReference>
<dbReference type="GO" id="GO:0004424">
    <property type="term" value="F:imidazoleglycerol-phosphate dehydratase activity"/>
    <property type="evidence" value="ECO:0007669"/>
    <property type="project" value="UniProtKB-UniRule"/>
</dbReference>
<dbReference type="GO" id="GO:0000105">
    <property type="term" value="P:L-histidine biosynthetic process"/>
    <property type="evidence" value="ECO:0007669"/>
    <property type="project" value="UniProtKB-UniRule"/>
</dbReference>
<dbReference type="CDD" id="cd07914">
    <property type="entry name" value="IGPD"/>
    <property type="match status" value="1"/>
</dbReference>
<dbReference type="FunFam" id="3.30.230.40:FF:000001">
    <property type="entry name" value="Imidazoleglycerol-phosphate dehydratase HisB"/>
    <property type="match status" value="1"/>
</dbReference>
<dbReference type="FunFam" id="3.30.230.40:FF:000003">
    <property type="entry name" value="Imidazoleglycerol-phosphate dehydratase HisB"/>
    <property type="match status" value="1"/>
</dbReference>
<dbReference type="Gene3D" id="3.30.230.40">
    <property type="entry name" value="Imidazole glycerol phosphate dehydratase, domain 1"/>
    <property type="match status" value="2"/>
</dbReference>
<dbReference type="HAMAP" id="MF_00076">
    <property type="entry name" value="HisB"/>
    <property type="match status" value="1"/>
</dbReference>
<dbReference type="InterPro" id="IPR038494">
    <property type="entry name" value="IGPD_sf"/>
</dbReference>
<dbReference type="InterPro" id="IPR000807">
    <property type="entry name" value="ImidazoleglycerolP_deHydtase"/>
</dbReference>
<dbReference type="InterPro" id="IPR020565">
    <property type="entry name" value="ImidazoleglycerP_deHydtase_CS"/>
</dbReference>
<dbReference type="InterPro" id="IPR020568">
    <property type="entry name" value="Ribosomal_Su5_D2-typ_SF"/>
</dbReference>
<dbReference type="NCBIfam" id="NF002107">
    <property type="entry name" value="PRK00951.1-2"/>
    <property type="match status" value="1"/>
</dbReference>
<dbReference type="NCBIfam" id="NF002111">
    <property type="entry name" value="PRK00951.2-1"/>
    <property type="match status" value="1"/>
</dbReference>
<dbReference type="NCBIfam" id="NF002114">
    <property type="entry name" value="PRK00951.2-4"/>
    <property type="match status" value="1"/>
</dbReference>
<dbReference type="NCBIfam" id="NF002115">
    <property type="entry name" value="PRK00951.2-5"/>
    <property type="match status" value="1"/>
</dbReference>
<dbReference type="PANTHER" id="PTHR23133:SF2">
    <property type="entry name" value="IMIDAZOLEGLYCEROL-PHOSPHATE DEHYDRATASE"/>
    <property type="match status" value="1"/>
</dbReference>
<dbReference type="PANTHER" id="PTHR23133">
    <property type="entry name" value="IMIDAZOLEGLYCEROL-PHOSPHATE DEHYDRATASE HIS7"/>
    <property type="match status" value="1"/>
</dbReference>
<dbReference type="Pfam" id="PF00475">
    <property type="entry name" value="IGPD"/>
    <property type="match status" value="1"/>
</dbReference>
<dbReference type="SUPFAM" id="SSF54211">
    <property type="entry name" value="Ribosomal protein S5 domain 2-like"/>
    <property type="match status" value="2"/>
</dbReference>
<dbReference type="PROSITE" id="PS00954">
    <property type="entry name" value="IGP_DEHYDRATASE_1"/>
    <property type="match status" value="1"/>
</dbReference>
<dbReference type="PROSITE" id="PS00955">
    <property type="entry name" value="IGP_DEHYDRATASE_2"/>
    <property type="match status" value="1"/>
</dbReference>
<gene>
    <name evidence="1" type="primary">hisB</name>
    <name type="ordered locus">BH3581</name>
</gene>
<feature type="chain" id="PRO_0000158106" description="Imidazoleglycerol-phosphate dehydratase">
    <location>
        <begin position="1"/>
        <end position="194"/>
    </location>
</feature>
<comment type="catalytic activity">
    <reaction evidence="1">
        <text>D-erythro-1-(imidazol-4-yl)glycerol 3-phosphate = 3-(imidazol-4-yl)-2-oxopropyl phosphate + H2O</text>
        <dbReference type="Rhea" id="RHEA:11040"/>
        <dbReference type="ChEBI" id="CHEBI:15377"/>
        <dbReference type="ChEBI" id="CHEBI:57766"/>
        <dbReference type="ChEBI" id="CHEBI:58278"/>
        <dbReference type="EC" id="4.2.1.19"/>
    </reaction>
</comment>
<comment type="pathway">
    <text evidence="1">Amino-acid biosynthesis; L-histidine biosynthesis; L-histidine from 5-phospho-alpha-D-ribose 1-diphosphate: step 6/9.</text>
</comment>
<comment type="subcellular location">
    <subcellularLocation>
        <location evidence="1">Cytoplasm</location>
    </subcellularLocation>
</comment>
<comment type="similarity">
    <text evidence="1">Belongs to the imidazoleglycerol-phosphate dehydratase family.</text>
</comment>
<proteinExistence type="inferred from homology"/>
<name>HIS7_HALH5</name>
<organism>
    <name type="scientific">Halalkalibacterium halodurans (strain ATCC BAA-125 / DSM 18197 / FERM 7344 / JCM 9153 / C-125)</name>
    <name type="common">Bacillus halodurans</name>
    <dbReference type="NCBI Taxonomy" id="272558"/>
    <lineage>
        <taxon>Bacteria</taxon>
        <taxon>Bacillati</taxon>
        <taxon>Bacillota</taxon>
        <taxon>Bacilli</taxon>
        <taxon>Bacillales</taxon>
        <taxon>Bacillaceae</taxon>
        <taxon>Halalkalibacterium (ex Joshi et al. 2022)</taxon>
    </lineage>
</organism>
<protein>
    <recommendedName>
        <fullName evidence="1">Imidazoleglycerol-phosphate dehydratase</fullName>
        <shortName evidence="1">IGPD</shortName>
        <ecNumber evidence="1">4.2.1.19</ecNumber>
    </recommendedName>
</protein>
<sequence length="194" mass="21591">MRKATIERKTGETQISLTFAVDGEGQSNLTTGVPFMTHMLDLFTKHGHFNLTIDAKGDTEVDDHHTTEDLGICLGLALKEALADKKGIRRYGSAFVPMDETLAQVVVDLSNRPHLEFRADMPSEKVGTFDTELVHEFLWKLALEARMNLHVIVHYGENTHHIIEAIFKALARALDEATTIDPRVKGVPSTKGML</sequence>
<evidence type="ECO:0000255" key="1">
    <source>
        <dbReference type="HAMAP-Rule" id="MF_00076"/>
    </source>
</evidence>